<reference key="1">
    <citation type="journal article" date="2006" name="PLoS Genet.">
        <title>The complete genome sequence and comparative genome analysis of the high pathogenicity Yersinia enterocolitica strain 8081.</title>
        <authorList>
            <person name="Thomson N.R."/>
            <person name="Howard S."/>
            <person name="Wren B.W."/>
            <person name="Holden M.T.G."/>
            <person name="Crossman L."/>
            <person name="Challis G.L."/>
            <person name="Churcher C."/>
            <person name="Mungall K."/>
            <person name="Brooks K."/>
            <person name="Chillingworth T."/>
            <person name="Feltwell T."/>
            <person name="Abdellah Z."/>
            <person name="Hauser H."/>
            <person name="Jagels K."/>
            <person name="Maddison M."/>
            <person name="Moule S."/>
            <person name="Sanders M."/>
            <person name="Whitehead S."/>
            <person name="Quail M.A."/>
            <person name="Dougan G."/>
            <person name="Parkhill J."/>
            <person name="Prentice M.B."/>
        </authorList>
    </citation>
    <scope>NUCLEOTIDE SEQUENCE [LARGE SCALE GENOMIC DNA]</scope>
    <source>
        <strain>NCTC 13174 / 8081</strain>
    </source>
</reference>
<comment type="function">
    <text evidence="1">This is one of the proteins that bind and probably mediate the attachment of the 5S RNA into the large ribosomal subunit, where it forms part of the central protuberance. In the 70S ribosome it contacts protein S13 of the 30S subunit (bridge B1b), connecting the 2 subunits; this bridge is implicated in subunit movement. Contacts the P site tRNA; the 5S rRNA and some of its associated proteins might help stabilize positioning of ribosome-bound tRNAs.</text>
</comment>
<comment type="subunit">
    <text evidence="1">Part of the 50S ribosomal subunit; part of the 5S rRNA/L5/L18/L25 subcomplex. Contacts the 5S rRNA and the P site tRNA. Forms a bridge to the 30S subunit in the 70S ribosome.</text>
</comment>
<comment type="similarity">
    <text evidence="1">Belongs to the universal ribosomal protein uL5 family.</text>
</comment>
<gene>
    <name evidence="1" type="primary">rplE</name>
    <name type="ordered locus">YE3911</name>
</gene>
<proteinExistence type="inferred from homology"/>
<sequence length="179" mass="20287">MAKLHDYYKDEVVKQLMSQFDYNSVMQVPRVEKITLNMGVGEAIADKKLLDNAAADLAAISGQKPFITKARKSVAGFKIRQGYPIGCKVTLRGERMWEFLERLITIAVPRIRDFRGLSAKSFDGRGNYSMGVREQIIFPEIDYDKVDRVRGLDITITTTAKSDDEGRALLAAFKFPFRK</sequence>
<dbReference type="EMBL" id="AM286415">
    <property type="protein sequence ID" value="CAL13930.1"/>
    <property type="molecule type" value="Genomic_DNA"/>
</dbReference>
<dbReference type="RefSeq" id="WP_005159856.1">
    <property type="nucleotide sequence ID" value="NC_008800.1"/>
</dbReference>
<dbReference type="RefSeq" id="YP_001008056.1">
    <property type="nucleotide sequence ID" value="NC_008800.1"/>
</dbReference>
<dbReference type="SMR" id="A1JS20"/>
<dbReference type="GeneID" id="97454243"/>
<dbReference type="KEGG" id="yen:YE3911"/>
<dbReference type="PATRIC" id="fig|393305.7.peg.4161"/>
<dbReference type="eggNOG" id="COG0094">
    <property type="taxonomic scope" value="Bacteria"/>
</dbReference>
<dbReference type="HOGENOM" id="CLU_061015_2_1_6"/>
<dbReference type="OrthoDB" id="9806626at2"/>
<dbReference type="Proteomes" id="UP000000642">
    <property type="component" value="Chromosome"/>
</dbReference>
<dbReference type="GO" id="GO:1990904">
    <property type="term" value="C:ribonucleoprotein complex"/>
    <property type="evidence" value="ECO:0007669"/>
    <property type="project" value="UniProtKB-KW"/>
</dbReference>
<dbReference type="GO" id="GO:0005840">
    <property type="term" value="C:ribosome"/>
    <property type="evidence" value="ECO:0007669"/>
    <property type="project" value="UniProtKB-KW"/>
</dbReference>
<dbReference type="GO" id="GO:0019843">
    <property type="term" value="F:rRNA binding"/>
    <property type="evidence" value="ECO:0007669"/>
    <property type="project" value="UniProtKB-UniRule"/>
</dbReference>
<dbReference type="GO" id="GO:0003735">
    <property type="term" value="F:structural constituent of ribosome"/>
    <property type="evidence" value="ECO:0007669"/>
    <property type="project" value="InterPro"/>
</dbReference>
<dbReference type="GO" id="GO:0000049">
    <property type="term" value="F:tRNA binding"/>
    <property type="evidence" value="ECO:0007669"/>
    <property type="project" value="UniProtKB-UniRule"/>
</dbReference>
<dbReference type="GO" id="GO:0006412">
    <property type="term" value="P:translation"/>
    <property type="evidence" value="ECO:0007669"/>
    <property type="project" value="UniProtKB-UniRule"/>
</dbReference>
<dbReference type="FunFam" id="3.30.1440.10:FF:000001">
    <property type="entry name" value="50S ribosomal protein L5"/>
    <property type="match status" value="1"/>
</dbReference>
<dbReference type="Gene3D" id="3.30.1440.10">
    <property type="match status" value="1"/>
</dbReference>
<dbReference type="HAMAP" id="MF_01333_B">
    <property type="entry name" value="Ribosomal_uL5_B"/>
    <property type="match status" value="1"/>
</dbReference>
<dbReference type="InterPro" id="IPR002132">
    <property type="entry name" value="Ribosomal_uL5"/>
</dbReference>
<dbReference type="InterPro" id="IPR020930">
    <property type="entry name" value="Ribosomal_uL5_bac-type"/>
</dbReference>
<dbReference type="InterPro" id="IPR031309">
    <property type="entry name" value="Ribosomal_uL5_C"/>
</dbReference>
<dbReference type="InterPro" id="IPR022803">
    <property type="entry name" value="Ribosomal_uL5_dom_sf"/>
</dbReference>
<dbReference type="InterPro" id="IPR031310">
    <property type="entry name" value="Ribosomal_uL5_N"/>
</dbReference>
<dbReference type="NCBIfam" id="NF000585">
    <property type="entry name" value="PRK00010.1"/>
    <property type="match status" value="1"/>
</dbReference>
<dbReference type="PANTHER" id="PTHR11994">
    <property type="entry name" value="60S RIBOSOMAL PROTEIN L11-RELATED"/>
    <property type="match status" value="1"/>
</dbReference>
<dbReference type="Pfam" id="PF00281">
    <property type="entry name" value="Ribosomal_L5"/>
    <property type="match status" value="1"/>
</dbReference>
<dbReference type="Pfam" id="PF00673">
    <property type="entry name" value="Ribosomal_L5_C"/>
    <property type="match status" value="1"/>
</dbReference>
<dbReference type="PIRSF" id="PIRSF002161">
    <property type="entry name" value="Ribosomal_L5"/>
    <property type="match status" value="1"/>
</dbReference>
<dbReference type="SUPFAM" id="SSF55282">
    <property type="entry name" value="RL5-like"/>
    <property type="match status" value="1"/>
</dbReference>
<evidence type="ECO:0000255" key="1">
    <source>
        <dbReference type="HAMAP-Rule" id="MF_01333"/>
    </source>
</evidence>
<evidence type="ECO:0000305" key="2"/>
<feature type="chain" id="PRO_1000052856" description="Large ribosomal subunit protein uL5">
    <location>
        <begin position="1"/>
        <end position="179"/>
    </location>
</feature>
<organism>
    <name type="scientific">Yersinia enterocolitica serotype O:8 / biotype 1B (strain NCTC 13174 / 8081)</name>
    <dbReference type="NCBI Taxonomy" id="393305"/>
    <lineage>
        <taxon>Bacteria</taxon>
        <taxon>Pseudomonadati</taxon>
        <taxon>Pseudomonadota</taxon>
        <taxon>Gammaproteobacteria</taxon>
        <taxon>Enterobacterales</taxon>
        <taxon>Yersiniaceae</taxon>
        <taxon>Yersinia</taxon>
    </lineage>
</organism>
<protein>
    <recommendedName>
        <fullName evidence="1">Large ribosomal subunit protein uL5</fullName>
    </recommendedName>
    <alternativeName>
        <fullName evidence="2">50S ribosomal protein L5</fullName>
    </alternativeName>
</protein>
<name>RL5_YERE8</name>
<accession>A1JS20</accession>
<keyword id="KW-0687">Ribonucleoprotein</keyword>
<keyword id="KW-0689">Ribosomal protein</keyword>
<keyword id="KW-0694">RNA-binding</keyword>
<keyword id="KW-0699">rRNA-binding</keyword>
<keyword id="KW-0820">tRNA-binding</keyword>